<dbReference type="EC" id="6.1.1.20" evidence="1"/>
<dbReference type="EMBL" id="BA000030">
    <property type="protein sequence ID" value="BAC74453.1"/>
    <property type="molecule type" value="Genomic_DNA"/>
</dbReference>
<dbReference type="SMR" id="Q828C7"/>
<dbReference type="KEGG" id="sma:SAVERM_6742"/>
<dbReference type="eggNOG" id="COG0016">
    <property type="taxonomic scope" value="Bacteria"/>
</dbReference>
<dbReference type="HOGENOM" id="CLU_025086_0_0_11"/>
<dbReference type="Proteomes" id="UP000000428">
    <property type="component" value="Chromosome"/>
</dbReference>
<dbReference type="GO" id="GO:0005737">
    <property type="term" value="C:cytoplasm"/>
    <property type="evidence" value="ECO:0007669"/>
    <property type="project" value="UniProtKB-SubCell"/>
</dbReference>
<dbReference type="GO" id="GO:0005524">
    <property type="term" value="F:ATP binding"/>
    <property type="evidence" value="ECO:0007669"/>
    <property type="project" value="UniProtKB-UniRule"/>
</dbReference>
<dbReference type="GO" id="GO:0000287">
    <property type="term" value="F:magnesium ion binding"/>
    <property type="evidence" value="ECO:0007669"/>
    <property type="project" value="UniProtKB-UniRule"/>
</dbReference>
<dbReference type="GO" id="GO:0004826">
    <property type="term" value="F:phenylalanine-tRNA ligase activity"/>
    <property type="evidence" value="ECO:0007669"/>
    <property type="project" value="UniProtKB-UniRule"/>
</dbReference>
<dbReference type="GO" id="GO:0000049">
    <property type="term" value="F:tRNA binding"/>
    <property type="evidence" value="ECO:0007669"/>
    <property type="project" value="InterPro"/>
</dbReference>
<dbReference type="GO" id="GO:0006432">
    <property type="term" value="P:phenylalanyl-tRNA aminoacylation"/>
    <property type="evidence" value="ECO:0007669"/>
    <property type="project" value="UniProtKB-UniRule"/>
</dbReference>
<dbReference type="CDD" id="cd00496">
    <property type="entry name" value="PheRS_alpha_core"/>
    <property type="match status" value="1"/>
</dbReference>
<dbReference type="FunFam" id="3.30.930.10:FF:000003">
    <property type="entry name" value="Phenylalanine--tRNA ligase alpha subunit"/>
    <property type="match status" value="1"/>
</dbReference>
<dbReference type="Gene3D" id="3.30.930.10">
    <property type="entry name" value="Bira Bifunctional Protein, Domain 2"/>
    <property type="match status" value="1"/>
</dbReference>
<dbReference type="HAMAP" id="MF_00281">
    <property type="entry name" value="Phe_tRNA_synth_alpha1"/>
    <property type="match status" value="1"/>
</dbReference>
<dbReference type="InterPro" id="IPR006195">
    <property type="entry name" value="aa-tRNA-synth_II"/>
</dbReference>
<dbReference type="InterPro" id="IPR045864">
    <property type="entry name" value="aa-tRNA-synth_II/BPL/LPL"/>
</dbReference>
<dbReference type="InterPro" id="IPR004529">
    <property type="entry name" value="Phe-tRNA-synth_IIc_asu"/>
</dbReference>
<dbReference type="InterPro" id="IPR004188">
    <property type="entry name" value="Phe-tRNA_ligase_II_N"/>
</dbReference>
<dbReference type="InterPro" id="IPR022911">
    <property type="entry name" value="Phe_tRNA_ligase_alpha1_bac"/>
</dbReference>
<dbReference type="InterPro" id="IPR002319">
    <property type="entry name" value="Phenylalanyl-tRNA_Synthase"/>
</dbReference>
<dbReference type="InterPro" id="IPR010978">
    <property type="entry name" value="tRNA-bd_arm"/>
</dbReference>
<dbReference type="NCBIfam" id="TIGR00468">
    <property type="entry name" value="pheS"/>
    <property type="match status" value="1"/>
</dbReference>
<dbReference type="PANTHER" id="PTHR11538:SF41">
    <property type="entry name" value="PHENYLALANINE--TRNA LIGASE, MITOCHONDRIAL"/>
    <property type="match status" value="1"/>
</dbReference>
<dbReference type="PANTHER" id="PTHR11538">
    <property type="entry name" value="PHENYLALANYL-TRNA SYNTHETASE"/>
    <property type="match status" value="1"/>
</dbReference>
<dbReference type="Pfam" id="PF02912">
    <property type="entry name" value="Phe_tRNA-synt_N"/>
    <property type="match status" value="1"/>
</dbReference>
<dbReference type="Pfam" id="PF01409">
    <property type="entry name" value="tRNA-synt_2d"/>
    <property type="match status" value="1"/>
</dbReference>
<dbReference type="SUPFAM" id="SSF55681">
    <property type="entry name" value="Class II aaRS and biotin synthetases"/>
    <property type="match status" value="1"/>
</dbReference>
<dbReference type="SUPFAM" id="SSF46589">
    <property type="entry name" value="tRNA-binding arm"/>
    <property type="match status" value="1"/>
</dbReference>
<dbReference type="PROSITE" id="PS50862">
    <property type="entry name" value="AA_TRNA_LIGASE_II"/>
    <property type="match status" value="1"/>
</dbReference>
<keyword id="KW-0030">Aminoacyl-tRNA synthetase</keyword>
<keyword id="KW-0067">ATP-binding</keyword>
<keyword id="KW-0963">Cytoplasm</keyword>
<keyword id="KW-0436">Ligase</keyword>
<keyword id="KW-0460">Magnesium</keyword>
<keyword id="KW-0479">Metal-binding</keyword>
<keyword id="KW-0547">Nucleotide-binding</keyword>
<keyword id="KW-0648">Protein biosynthesis</keyword>
<keyword id="KW-1185">Reference proteome</keyword>
<reference key="1">
    <citation type="journal article" date="2001" name="Proc. Natl. Acad. Sci. U.S.A.">
        <title>Genome sequence of an industrial microorganism Streptomyces avermitilis: deducing the ability of producing secondary metabolites.</title>
        <authorList>
            <person name="Omura S."/>
            <person name="Ikeda H."/>
            <person name="Ishikawa J."/>
            <person name="Hanamoto A."/>
            <person name="Takahashi C."/>
            <person name="Shinose M."/>
            <person name="Takahashi Y."/>
            <person name="Horikawa H."/>
            <person name="Nakazawa H."/>
            <person name="Osonoe T."/>
            <person name="Kikuchi H."/>
            <person name="Shiba T."/>
            <person name="Sakaki Y."/>
            <person name="Hattori M."/>
        </authorList>
    </citation>
    <scope>NUCLEOTIDE SEQUENCE [LARGE SCALE GENOMIC DNA]</scope>
    <source>
        <strain>ATCC 31267 / DSM 46492 / JCM 5070 / NBRC 14893 / NCIMB 12804 / NRRL 8165 / MA-4680</strain>
    </source>
</reference>
<reference key="2">
    <citation type="journal article" date="2003" name="Nat. Biotechnol.">
        <title>Complete genome sequence and comparative analysis of the industrial microorganism Streptomyces avermitilis.</title>
        <authorList>
            <person name="Ikeda H."/>
            <person name="Ishikawa J."/>
            <person name="Hanamoto A."/>
            <person name="Shinose M."/>
            <person name="Kikuchi H."/>
            <person name="Shiba T."/>
            <person name="Sakaki Y."/>
            <person name="Hattori M."/>
            <person name="Omura S."/>
        </authorList>
    </citation>
    <scope>NUCLEOTIDE SEQUENCE [LARGE SCALE GENOMIC DNA]</scope>
    <source>
        <strain>ATCC 31267 / DSM 46492 / JCM 5070 / NBRC 14893 / NCIMB 12804 / NRRL 8165 / MA-4680</strain>
    </source>
</reference>
<proteinExistence type="inferred from homology"/>
<gene>
    <name evidence="1" type="primary">pheS</name>
    <name type="ordered locus">SAV_6742</name>
</gene>
<comment type="catalytic activity">
    <reaction evidence="1">
        <text>tRNA(Phe) + L-phenylalanine + ATP = L-phenylalanyl-tRNA(Phe) + AMP + diphosphate + H(+)</text>
        <dbReference type="Rhea" id="RHEA:19413"/>
        <dbReference type="Rhea" id="RHEA-COMP:9668"/>
        <dbReference type="Rhea" id="RHEA-COMP:9699"/>
        <dbReference type="ChEBI" id="CHEBI:15378"/>
        <dbReference type="ChEBI" id="CHEBI:30616"/>
        <dbReference type="ChEBI" id="CHEBI:33019"/>
        <dbReference type="ChEBI" id="CHEBI:58095"/>
        <dbReference type="ChEBI" id="CHEBI:78442"/>
        <dbReference type="ChEBI" id="CHEBI:78531"/>
        <dbReference type="ChEBI" id="CHEBI:456215"/>
        <dbReference type="EC" id="6.1.1.20"/>
    </reaction>
</comment>
<comment type="cofactor">
    <cofactor evidence="1">
        <name>Mg(2+)</name>
        <dbReference type="ChEBI" id="CHEBI:18420"/>
    </cofactor>
    <text evidence="1">Binds 2 magnesium ions per tetramer.</text>
</comment>
<comment type="subunit">
    <text evidence="1">Tetramer of two alpha and two beta subunits.</text>
</comment>
<comment type="subcellular location">
    <subcellularLocation>
        <location evidence="1">Cytoplasm</location>
    </subcellularLocation>
</comment>
<comment type="similarity">
    <text evidence="1">Belongs to the class-II aminoacyl-tRNA synthetase family. Phe-tRNA synthetase alpha subunit type 1 subfamily.</text>
</comment>
<protein>
    <recommendedName>
        <fullName evidence="1">Phenylalanine--tRNA ligase alpha subunit</fullName>
        <ecNumber evidence="1">6.1.1.20</ecNumber>
    </recommendedName>
    <alternativeName>
        <fullName evidence="1">Phenylalanyl-tRNA synthetase alpha subunit</fullName>
        <shortName evidence="1">PheRS</shortName>
    </alternativeName>
</protein>
<feature type="chain" id="PRO_0000126770" description="Phenylalanine--tRNA ligase alpha subunit">
    <location>
        <begin position="1"/>
        <end position="360"/>
    </location>
</feature>
<feature type="binding site" evidence="1">
    <location>
        <position position="264"/>
    </location>
    <ligand>
        <name>Mg(2+)</name>
        <dbReference type="ChEBI" id="CHEBI:18420"/>
        <note>shared with beta subunit</note>
    </ligand>
</feature>
<organism>
    <name type="scientific">Streptomyces avermitilis (strain ATCC 31267 / DSM 46492 / JCM 5070 / NBRC 14893 / NCIMB 12804 / NRRL 8165 / MA-4680)</name>
    <dbReference type="NCBI Taxonomy" id="227882"/>
    <lineage>
        <taxon>Bacteria</taxon>
        <taxon>Bacillati</taxon>
        <taxon>Actinomycetota</taxon>
        <taxon>Actinomycetes</taxon>
        <taxon>Kitasatosporales</taxon>
        <taxon>Streptomycetaceae</taxon>
        <taxon>Streptomyces</taxon>
    </lineage>
</organism>
<evidence type="ECO:0000255" key="1">
    <source>
        <dbReference type="HAMAP-Rule" id="MF_00281"/>
    </source>
</evidence>
<accession>Q828C7</accession>
<name>SYFA_STRAW</name>
<sequence>MKPEEIERMRDEALAAFAAAGDLDALQEAKVAHTGGTSPLALANREIGALPPHAKAAAGKLVGQARGAVNKALGARQAELEAERDARVLVEEAVDVTLPYDRVPAGARHPLTTFMERVADVFVAMGYEIAEGPEVEAEWFNFDALNFTPDHPARQMQDTFFVEGPKGTEGDESGVVLRTHTSPVQARAMLDREPPVYIVCPGRVYRTDELDATHTPVFHQIELLAIDEGLTMADLKGTLDHMVQTLFGADMKTRLRPNYFPFTEPSAEMDMLCYVCKGESVGNPDRPCRTCSSEGWIELGGCGMVNPRVLTACGVDPEKYSGFAFGFGIERMLMFRHNVEDMRDMVEGDVRFTRPFGMEI</sequence>